<dbReference type="EC" id="3.1.1.-" evidence="8"/>
<dbReference type="EMBL" id="CM000580">
    <property type="protein sequence ID" value="EWG54421.1"/>
    <property type="molecule type" value="Genomic_DNA"/>
</dbReference>
<dbReference type="RefSeq" id="XP_018760612.1">
    <property type="nucleotide sequence ID" value="XM_018901989.1"/>
</dbReference>
<dbReference type="SMR" id="W7MTJ1"/>
<dbReference type="STRING" id="334819.W7MTJ1"/>
<dbReference type="ESTHER" id="gibm7-fdb39">
    <property type="family name" value="Hormone-sensitive_lipase_like"/>
</dbReference>
<dbReference type="GeneID" id="30070067"/>
<dbReference type="KEGG" id="fvr:FVEG_12639"/>
<dbReference type="VEuPathDB" id="FungiDB:FVEG_12639"/>
<dbReference type="eggNOG" id="KOG1515">
    <property type="taxonomic scope" value="Eukaryota"/>
</dbReference>
<dbReference type="OrthoDB" id="35199at110618"/>
<dbReference type="Proteomes" id="UP000009096">
    <property type="component" value="Chromosome 3"/>
</dbReference>
<dbReference type="GO" id="GO:0016787">
    <property type="term" value="F:hydrolase activity"/>
    <property type="evidence" value="ECO:0007669"/>
    <property type="project" value="UniProtKB-KW"/>
</dbReference>
<dbReference type="Gene3D" id="3.40.50.1820">
    <property type="entry name" value="alpha/beta hydrolase"/>
    <property type="match status" value="1"/>
</dbReference>
<dbReference type="InterPro" id="IPR013094">
    <property type="entry name" value="AB_hydrolase_3"/>
</dbReference>
<dbReference type="InterPro" id="IPR029058">
    <property type="entry name" value="AB_hydrolase_fold"/>
</dbReference>
<dbReference type="InterPro" id="IPR050300">
    <property type="entry name" value="GDXG_lipolytic_enzyme"/>
</dbReference>
<dbReference type="PANTHER" id="PTHR48081">
    <property type="entry name" value="AB HYDROLASE SUPERFAMILY PROTEIN C4A8.06C"/>
    <property type="match status" value="1"/>
</dbReference>
<dbReference type="PANTHER" id="PTHR48081:SF8">
    <property type="entry name" value="ALPHA_BETA HYDROLASE FOLD-3 DOMAIN-CONTAINING PROTEIN-RELATED"/>
    <property type="match status" value="1"/>
</dbReference>
<dbReference type="Pfam" id="PF07859">
    <property type="entry name" value="Abhydrolase_3"/>
    <property type="match status" value="1"/>
</dbReference>
<dbReference type="SUPFAM" id="SSF53474">
    <property type="entry name" value="alpha/beta-Hydrolases"/>
    <property type="match status" value="1"/>
</dbReference>
<reference key="1">
    <citation type="journal article" date="2010" name="Nature">
        <title>Comparative genomics reveals mobile pathogenicity chromosomes in Fusarium.</title>
        <authorList>
            <person name="Ma L.-J."/>
            <person name="van der Does H.C."/>
            <person name="Borkovich K.A."/>
            <person name="Coleman J.J."/>
            <person name="Daboussi M.-J."/>
            <person name="Di Pietro A."/>
            <person name="Dufresne M."/>
            <person name="Freitag M."/>
            <person name="Grabherr M."/>
            <person name="Henrissat B."/>
            <person name="Houterman P.M."/>
            <person name="Kang S."/>
            <person name="Shim W.-B."/>
            <person name="Woloshuk C."/>
            <person name="Xie X."/>
            <person name="Xu J.-R."/>
            <person name="Antoniw J."/>
            <person name="Baker S.E."/>
            <person name="Bluhm B.H."/>
            <person name="Breakspear A."/>
            <person name="Brown D.W."/>
            <person name="Butchko R.A.E."/>
            <person name="Chapman S."/>
            <person name="Coulson R."/>
            <person name="Coutinho P.M."/>
            <person name="Danchin E.G.J."/>
            <person name="Diener A."/>
            <person name="Gale L.R."/>
            <person name="Gardiner D.M."/>
            <person name="Goff S."/>
            <person name="Hammond-Kosack K.E."/>
            <person name="Hilburn K."/>
            <person name="Hua-Van A."/>
            <person name="Jonkers W."/>
            <person name="Kazan K."/>
            <person name="Kodira C.D."/>
            <person name="Koehrsen M."/>
            <person name="Kumar L."/>
            <person name="Lee Y.-H."/>
            <person name="Li L."/>
            <person name="Manners J.M."/>
            <person name="Miranda-Saavedra D."/>
            <person name="Mukherjee M."/>
            <person name="Park G."/>
            <person name="Park J."/>
            <person name="Park S.-Y."/>
            <person name="Proctor R.H."/>
            <person name="Regev A."/>
            <person name="Ruiz-Roldan M.C."/>
            <person name="Sain D."/>
            <person name="Sakthikumar S."/>
            <person name="Sykes S."/>
            <person name="Schwartz D.C."/>
            <person name="Turgeon B.G."/>
            <person name="Wapinski I."/>
            <person name="Yoder O."/>
            <person name="Young S."/>
            <person name="Zeng Q."/>
            <person name="Zhou S."/>
            <person name="Galagan J."/>
            <person name="Cuomo C.A."/>
            <person name="Kistler H.C."/>
            <person name="Rep M."/>
        </authorList>
    </citation>
    <scope>NUCLEOTIDE SEQUENCE [LARGE SCALE GENOMIC DNA]</scope>
    <source>
        <strain>M3125 / FGSC 7600</strain>
    </source>
</reference>
<reference key="2">
    <citation type="journal article" date="2002" name="Mol. Plant Microbe Interact.">
        <title>Fdb1 and Fdb2, Fusarium verticillioides loci necessary for detoxification of preformed antimicrobials from corn.</title>
        <authorList>
            <person name="Glenn A.E."/>
            <person name="Gold S.E."/>
            <person name="Bacon C.W."/>
        </authorList>
    </citation>
    <scope>FUNCTION</scope>
</reference>
<reference key="3">
    <citation type="journal article" date="2003" name="Appl. Environ. Microbiol.">
        <title>Identification of intermediate and branch metabolites resulting from biotransformation of 2-benzoxazolinone by Fusarium verticillioides.</title>
        <authorList>
            <person name="Glenn A.E."/>
            <person name="Meredith F.I."/>
            <person name="Morrison W.H. III"/>
            <person name="Bacon C.W."/>
        </authorList>
    </citation>
    <scope>FUNCTION</scope>
</reference>
<reference key="4">
    <citation type="journal article" date="2009" name="J. Appl. Microbiol.">
        <title>FDB2 encodes a member of the arylamine N-acetyltransferase family and is necessary for biotransformation of benzoxazolinones by Fusarium verticillioides.</title>
        <authorList>
            <person name="Glenn A.E."/>
            <person name="Bacon C.W."/>
        </authorList>
    </citation>
    <scope>FUNCTION</scope>
    <scope>DISRUPTION PHENOTYPE</scope>
</reference>
<reference key="5">
    <citation type="journal article" date="2016" name="PLoS ONE">
        <title>Two horizontally transferred xenobiotic resistance gene clusters associated with detoxification of benzoxazolinones by Fusarium species.</title>
        <authorList>
            <person name="Glenn A.E."/>
            <person name="Davis C.B."/>
            <person name="Gao M."/>
            <person name="Gold S.E."/>
            <person name="Mitchell T.R."/>
            <person name="Proctor R.H."/>
            <person name="Stewart J.E."/>
            <person name="Snook M.E."/>
        </authorList>
    </citation>
    <scope>FUNCTION</scope>
    <scope>INDUCTION</scope>
</reference>
<feature type="chain" id="PRO_0000454617" description="Esterase FVEG_12639">
    <location>
        <begin position="1"/>
        <end position="318"/>
    </location>
</feature>
<feature type="active site" evidence="1">
    <location>
        <position position="156"/>
    </location>
</feature>
<feature type="active site" evidence="1">
    <location>
        <position position="255"/>
    </location>
</feature>
<feature type="active site" evidence="1">
    <location>
        <position position="285"/>
    </location>
</feature>
<evidence type="ECO:0000250" key="1">
    <source>
        <dbReference type="UniProtKB" id="O06350"/>
    </source>
</evidence>
<evidence type="ECO:0000269" key="2">
    <source>
    </source>
</evidence>
<evidence type="ECO:0000269" key="3">
    <source>
    </source>
</evidence>
<evidence type="ECO:0000269" key="4">
    <source>
    </source>
</evidence>
<evidence type="ECO:0000269" key="5">
    <source>
    </source>
</evidence>
<evidence type="ECO:0000303" key="6">
    <source>
    </source>
</evidence>
<evidence type="ECO:0000305" key="7"/>
<evidence type="ECO:0000305" key="8">
    <source>
    </source>
</evidence>
<evidence type="ECO:0000305" key="9">
    <source>
    </source>
</evidence>
<comment type="function">
    <text evidence="2 3 4 5 9">Esterase; part of the Fusarium detoxification of benzoxazolinone cluster 2 (FDB2) involved in the degradation of benzoxazolinones produced by the host plant (PubMed:19302487, PubMed:26808652). Maize, wheat, and rye produce the 2 benzoxazinone phytoanticipins 2,4-dihy-droxy-7-methoxy-1,4-benzoxazin-3-one (DIMBOA) and 2,4-dihydroxy-1,4-benzoxazin-3-one (DIBOA) that, due to their inherent instability once released, spontaneously degrade to the more stable corresponding benzoxazolinones, 6-methoxy-2-benzoxazolinone (MBOA) and 2-benzoxazolinone (BOA), respectively (PubMed:11876429). The first step in the detoxification of benzoxazolinones involves the hydrolysis of the cyclic ester bond of benzoxazolinones by the FDB1 cluster gamma-lactamase MBL1 to aminophenols (PubMed:12788712, PubMed:26808652). MBL1 is able to convert BOA into 2-aminophenol (2-AP), as well as MBOA into 5-methoxy-2-aminophenol (2-AMP) (PubMed:12788712, PubMed:26808652). The FDB2 cluster N-malonyltransferase FDB2/NAT1 then metabolizes aminophenols via N-malonylation to non-toxic malonamic acids (PubMed:12788712, PubMed:19302487). FDB2/NAT1 converts 2-AP into N-(2-hydroxyphenyl) malonamic acid (HPMA) and 2-AMP into N-(2-hydroxy-4-methoxyphenyl) malonamic acid (HMPMA) (PubMed:12788712, PubMed:19302487). The duplicated dienlactone hydrolases DLH1 and DLH2 may provide redundant function for hydrolyzing the lactone moiety in the BOA molecule (Probable). The roles of the amidases an other enzymes encoded by the 2 FDB clusters have not been identified so far (Probable).</text>
</comment>
<comment type="induction">
    <text evidence="5">Expression is induced in response to 2-benzoxasolinone (BOA) exposure.</text>
</comment>
<comment type="disruption phenotype">
    <text evidence="4">Does not affect tolerance to 2-benzoxazolinone (BOA).</text>
</comment>
<comment type="miscellaneous">
    <text evidence="9">Fusarium verticillioides possesses 2 unlinked loci, FDB1 and FDB2, necessary for detoxification of antimicrobial compounds produced by maize, including 2-benzoxazolinone (BOA) (Probable). The FDB2 cluster arose as a duplication of the FDB1 cluster with rearrangement and expansion by incorporating additional genes (Probable).</text>
</comment>
<comment type="similarity">
    <text evidence="7">Belongs to the AB hydrolase 3 family.</text>
</comment>
<organism>
    <name type="scientific">Gibberella moniliformis (strain M3125 / FGSC 7600)</name>
    <name type="common">Maize ear and stalk rot fungus</name>
    <name type="synonym">Fusarium verticillioides</name>
    <dbReference type="NCBI Taxonomy" id="334819"/>
    <lineage>
        <taxon>Eukaryota</taxon>
        <taxon>Fungi</taxon>
        <taxon>Dikarya</taxon>
        <taxon>Ascomycota</taxon>
        <taxon>Pezizomycotina</taxon>
        <taxon>Sordariomycetes</taxon>
        <taxon>Hypocreomycetidae</taxon>
        <taxon>Hypocreales</taxon>
        <taxon>Nectriaceae</taxon>
        <taxon>Fusarium</taxon>
        <taxon>Fusarium fujikuroi species complex</taxon>
    </lineage>
</organism>
<keyword id="KW-0378">Hydrolase</keyword>
<keyword id="KW-1185">Reference proteome</keyword>
<name>FDB39_GIBM7</name>
<sequence>MVSLDPINAKFAAAIDGLPAPHQLGGPGKAFENLEELQRHEPANDIATQVIKVEGKYGPTSVTLFRSKALVDKPLPMIFYTHGGGWVMGSAKSFAVLVEDLARRTGAAVIFPDYTLAPHQTFPFPFEQSYEVLEYMIRHGKEYNLLVKTIALAGDSVGGHMAIAMMQMSLQRQLPATISQIVLWAPVTVTHKKYPSYTTFKDGPFLPEATMDWMIDTFIPSKSDRETALASPLTHLPDDVLSKFPPTIIFLSTVDPLVDEGVAFGQRLQGLGVDASVIKAEGQMHAFCLVTALRDGPTAQAVLELAALRLRKIFPDSA</sequence>
<gene>
    <name type="ORF">FVEG_12639</name>
</gene>
<accession>W7MTJ1</accession>
<proteinExistence type="evidence at transcript level"/>
<protein>
    <recommendedName>
        <fullName evidence="6">Esterase FVEG_12639</fullName>
        <ecNumber evidence="8">3.1.1.-</ecNumber>
    </recommendedName>
    <alternativeName>
        <fullName evidence="6">Fusarium detoxification of benzoxazolinone cluster 2 protein FVEG_12639</fullName>
        <shortName evidence="6">FDB2 cluster protein FVEG_12639</shortName>
    </alternativeName>
</protein>